<proteinExistence type="evidence at protein level"/>
<protein>
    <recommendedName>
        <fullName evidence="5">Purine nucleoside phosphoramidase</fullName>
        <ecNumber evidence="2 3 4">3.9.1.-</ecNumber>
    </recommendedName>
    <alternativeName>
        <fullName>Histidine triad nucleotide binding protein HinT</fullName>
        <shortName>HIT protein</shortName>
    </alternativeName>
</protein>
<comment type="function">
    <text evidence="2 3 4">Hydrolyzes purine nucleotide phosphoramidates, including adenosine 5'monophosphoramidate (AMP-NH2), adenosine 5'monophosphomorpholidate (AMP-morpholidate), guanosine 5'monophosphomorpholidate (GMP-morpholidate) and tryptamine 5'guanosine monophosphate (TpGd) (PubMed:15703176, PubMed:20934431). Hydrolyzes lysyl-AMP (AMP-N-epsilon-(N-alpha-acetyl lysine methyl ester)) generated by lysine--tRNA ligase, and lysyl-GMP (GMP-N-epsilon-(N-alpha-acetyl lysine methyl ester)) (PubMed:15703176). Is essential for the activity of the enzyme D-alanine dehydrogenase (DadA) and is required for E.coli to grow on D-alanine as a sole carbon source (PubMed:21754980). Is also required for growth at high salt concentrations (PubMed:15703176).</text>
</comment>
<comment type="subunit">
    <text evidence="2 3">Homodimer.</text>
</comment>
<comment type="disruption phenotype">
    <text evidence="2 4">Cells lacking this gene fail to grow on both D and L isomers of alanine due to a defect in DadA dehydrogenase activity, preventing D-alanine utilization (PubMed:21754980). The mutant cells do not have appreciable nucleoside phosphoramidase activity (PubMed:15703176, PubMed:21754980). The loss of hinT results in failure to grow in media containing 0.75 M KCl, 0.9 M NaCl, 0.5 M NaOAc, or 10 mM MnCl(2) (PubMed:15703176).</text>
</comment>
<comment type="similarity">
    <text evidence="6">Belongs to the HINT family.</text>
</comment>
<accession>P0ACE7</accession>
<accession>P36950</accession>
<accession>P75945</accession>
<reference key="1">
    <citation type="journal article" date="1996" name="DNA Res.">
        <title>A 718-kb DNA sequence of the Escherichia coli K-12 genome corresponding to the 12.7-28.0 min region on the linkage map.</title>
        <authorList>
            <person name="Oshima T."/>
            <person name="Aiba H."/>
            <person name="Baba T."/>
            <person name="Fujita K."/>
            <person name="Hayashi K."/>
            <person name="Honjo A."/>
            <person name="Ikemoto K."/>
            <person name="Inada T."/>
            <person name="Itoh T."/>
            <person name="Kajihara M."/>
            <person name="Kanai K."/>
            <person name="Kashimoto K."/>
            <person name="Kimura S."/>
            <person name="Kitagawa M."/>
            <person name="Makino K."/>
            <person name="Masuda S."/>
            <person name="Miki T."/>
            <person name="Mizobuchi K."/>
            <person name="Mori H."/>
            <person name="Motomura K."/>
            <person name="Nakamura Y."/>
            <person name="Nashimoto H."/>
            <person name="Nishio Y."/>
            <person name="Saito N."/>
            <person name="Sampei G."/>
            <person name="Seki Y."/>
            <person name="Tagami H."/>
            <person name="Takemoto K."/>
            <person name="Wada C."/>
            <person name="Yamamoto Y."/>
            <person name="Yano M."/>
            <person name="Horiuchi T."/>
        </authorList>
    </citation>
    <scope>NUCLEOTIDE SEQUENCE [LARGE SCALE GENOMIC DNA]</scope>
    <source>
        <strain>K12 / W3110 / ATCC 27325 / DSM 5911</strain>
    </source>
</reference>
<reference key="2">
    <citation type="journal article" date="1997" name="Science">
        <title>The complete genome sequence of Escherichia coli K-12.</title>
        <authorList>
            <person name="Blattner F.R."/>
            <person name="Plunkett G. III"/>
            <person name="Bloch C.A."/>
            <person name="Perna N.T."/>
            <person name="Burland V."/>
            <person name="Riley M."/>
            <person name="Collado-Vides J."/>
            <person name="Glasner J.D."/>
            <person name="Rode C.K."/>
            <person name="Mayhew G.F."/>
            <person name="Gregor J."/>
            <person name="Davis N.W."/>
            <person name="Kirkpatrick H.A."/>
            <person name="Goeden M.A."/>
            <person name="Rose D.J."/>
            <person name="Mau B."/>
            <person name="Shao Y."/>
        </authorList>
    </citation>
    <scope>NUCLEOTIDE SEQUENCE [LARGE SCALE GENOMIC DNA]</scope>
    <source>
        <strain>K12 / MG1655 / ATCC 47076</strain>
    </source>
</reference>
<reference key="3">
    <citation type="journal article" date="2006" name="Mol. Syst. Biol.">
        <title>Highly accurate genome sequences of Escherichia coli K-12 strains MG1655 and W3110.</title>
        <authorList>
            <person name="Hayashi K."/>
            <person name="Morooka N."/>
            <person name="Yamamoto Y."/>
            <person name="Fujita K."/>
            <person name="Isono K."/>
            <person name="Choi S."/>
            <person name="Ohtsubo E."/>
            <person name="Baba T."/>
            <person name="Wanner B.L."/>
            <person name="Mori H."/>
            <person name="Horiuchi T."/>
        </authorList>
    </citation>
    <scope>NUCLEOTIDE SEQUENCE [LARGE SCALE GENOMIC DNA]</scope>
    <source>
        <strain>K12 / W3110 / ATCC 27325 / DSM 5911</strain>
    </source>
</reference>
<reference key="4">
    <citation type="journal article" date="1990" name="Mol. Microbiol.">
        <title>Sequence of the fhuE outer-membrane receptor gene of Escherichia coli K12 and properties of mutants.</title>
        <authorList>
            <person name="Sauer U."/>
            <person name="Hantke K."/>
            <person name="Braun V."/>
        </authorList>
    </citation>
    <scope>NUCLEOTIDE SEQUENCE [GENOMIC DNA] OF 1-17</scope>
    <source>
        <strain>K12</strain>
    </source>
</reference>
<reference key="5">
    <citation type="unpublished observations" date="1994-03">
        <authorList>
            <person name="Baum B."/>
        </authorList>
    </citation>
    <scope>IDENTIFICATION</scope>
</reference>
<reference key="6">
    <citation type="journal article" date="1999" name="Electrophoresis">
        <title>Enrichment of low abundance proteins of Escherichia coli by hydroxyapatite chromatography.</title>
        <authorList>
            <person name="Fountoulakis M."/>
            <person name="Takacs M.-F."/>
            <person name="Berndt P."/>
            <person name="Langen H."/>
            <person name="Takacs B."/>
        </authorList>
    </citation>
    <scope>IDENTIFICATION BY MASS SPECTROMETRY</scope>
    <source>
        <strain>B / BL21</strain>
    </source>
</reference>
<reference key="7">
    <citation type="journal article" date="2005" name="J. Biol. Chem.">
        <title>31P NMR and genetic analysis establish hinT as the only Escherchia coli purine nucleoside phosphoramidase and as essential for growth under high salt conditions.</title>
        <authorList>
            <person name="Chou T.F."/>
            <person name="Bieganowski P."/>
            <person name="Shilinski K."/>
            <person name="Cheng J."/>
            <person name="Brenner C."/>
            <person name="Wagner C.R."/>
        </authorList>
    </citation>
    <scope>CATALYTIC ACTIVITY</scope>
    <scope>FUNCTION</scope>
    <scope>SUBUNIT</scope>
    <scope>ACTIVE SITE</scope>
    <scope>MUTAGENESIS OF HIS-101</scope>
    <scope>DISRUPTION PHENOTYPE</scope>
</reference>
<reference key="8">
    <citation type="journal article" date="2011" name="PLoS ONE">
        <title>E. coli histidine triad nucleotide binding protein 1 (ecHinT) is a catalytic regulator of D-alanine dehydrogenase (DadA) activity in vivo.</title>
        <authorList>
            <person name="Bardaweel S."/>
            <person name="Ghosh B."/>
            <person name="Chou T.F."/>
            <person name="Sadowsky M.J."/>
            <person name="Wagner C.R."/>
        </authorList>
    </citation>
    <scope>FUNCTION</scope>
    <scope>CATALYTIC ACTIVITY</scope>
    <scope>MUTAGENESIS OF HIS-101</scope>
    <scope>DISRUPTION PHENOTYPE</scope>
    <source>
        <strain>K12 / BW25113</strain>
    </source>
</reference>
<reference key="9">
    <citation type="journal article" date="2010" name="J. Mol. Biol.">
        <title>Probing the impact of the echinT C-terminal domain on structure and catalysis.</title>
        <authorList>
            <person name="Bardaweel S."/>
            <person name="Pace J."/>
            <person name="Chou T.F."/>
            <person name="Cody V."/>
            <person name="Wagner C.R."/>
        </authorList>
    </citation>
    <scope>X-RAY CRYSTALLOGRAPHY (1.45 ANGSTROMS) IN COMPLEX WITH GMP</scope>
    <scope>CATALYTIC ACTIVITY</scope>
    <scope>FUNCTION</scope>
    <scope>SUBUNIT</scope>
    <scope>ACTIVE SITE</scope>
    <scope>MUTAGENESIS OF HIS-101; 114-LEU--LEU-119 AND 117-LYS--LEU-119</scope>
</reference>
<organism>
    <name type="scientific">Escherichia coli (strain K12)</name>
    <dbReference type="NCBI Taxonomy" id="83333"/>
    <lineage>
        <taxon>Bacteria</taxon>
        <taxon>Pseudomonadati</taxon>
        <taxon>Pseudomonadota</taxon>
        <taxon>Gammaproteobacteria</taxon>
        <taxon>Enterobacterales</taxon>
        <taxon>Enterobacteriaceae</taxon>
        <taxon>Escherichia</taxon>
    </lineage>
</organism>
<keyword id="KW-0002">3D-structure</keyword>
<keyword id="KW-0378">Hydrolase</keyword>
<keyword id="KW-0547">Nucleotide-binding</keyword>
<keyword id="KW-1185">Reference proteome</keyword>
<feature type="chain" id="PRO_0000109830" description="Purine nucleoside phosphoramidase">
    <location>
        <begin position="1"/>
        <end position="119"/>
    </location>
</feature>
<feature type="domain" description="HIT" evidence="1">
    <location>
        <begin position="6"/>
        <end position="115"/>
    </location>
</feature>
<feature type="short sequence motif" description="Histidine triad motif" evidence="7">
    <location>
        <begin position="99"/>
        <end position="105"/>
    </location>
</feature>
<feature type="active site" description="Tele-AMP-histidine intermediate" evidence="2 3">
    <location>
        <position position="101"/>
    </location>
</feature>
<feature type="binding site" evidence="3 8">
    <location>
        <begin position="30"/>
        <end position="32"/>
    </location>
    <ligand>
        <name>GMP</name>
        <dbReference type="ChEBI" id="CHEBI:58115"/>
    </ligand>
</feature>
<feature type="binding site" evidence="3 8">
    <location>
        <position position="88"/>
    </location>
    <ligand>
        <name>GMP</name>
        <dbReference type="ChEBI" id="CHEBI:58115"/>
    </ligand>
</feature>
<feature type="binding site" evidence="3 8">
    <location>
        <begin position="96"/>
        <end position="97"/>
    </location>
    <ligand>
        <name>GMP</name>
        <dbReference type="ChEBI" id="CHEBI:58115"/>
    </ligand>
</feature>
<feature type="binding site" evidence="3 8">
    <location>
        <begin position="101"/>
        <end position="103"/>
    </location>
    <ligand>
        <name>GMP</name>
        <dbReference type="ChEBI" id="CHEBI:58115"/>
    </ligand>
</feature>
<feature type="mutagenesis site" description="Abolishes enzyme activity." evidence="2 3 4">
    <original>H</original>
    <variation>A</variation>
    <variation>G</variation>
    <location>
        <position position="101"/>
    </location>
</feature>
<feature type="mutagenesis site" description="Strongly reduces enzyme activity." evidence="3">
    <location>
        <begin position="114"/>
        <end position="119"/>
    </location>
</feature>
<feature type="mutagenesis site" description="Abolishes enzyme activity." evidence="3">
    <location>
        <begin position="117"/>
        <end position="119"/>
    </location>
</feature>
<feature type="helix" evidence="9">
    <location>
        <begin position="6"/>
        <end position="11"/>
    </location>
</feature>
<feature type="strand" evidence="9">
    <location>
        <begin position="19"/>
        <end position="22"/>
    </location>
</feature>
<feature type="strand" evidence="9">
    <location>
        <begin position="24"/>
        <end position="30"/>
    </location>
</feature>
<feature type="strand" evidence="9">
    <location>
        <begin position="35"/>
        <end position="46"/>
    </location>
</feature>
<feature type="helix" evidence="9">
    <location>
        <begin position="51"/>
        <end position="53"/>
    </location>
</feature>
<feature type="helix" evidence="9">
    <location>
        <begin position="56"/>
        <end position="58"/>
    </location>
</feature>
<feature type="helix" evidence="9">
    <location>
        <begin position="59"/>
        <end position="75"/>
    </location>
</feature>
<feature type="turn" evidence="9">
    <location>
        <begin position="79"/>
        <end position="81"/>
    </location>
</feature>
<feature type="strand" evidence="9">
    <location>
        <begin position="83"/>
        <end position="89"/>
    </location>
</feature>
<feature type="helix" evidence="9">
    <location>
        <begin position="90"/>
        <end position="93"/>
    </location>
</feature>
<feature type="strand" evidence="9">
    <location>
        <begin position="97"/>
        <end position="99"/>
    </location>
</feature>
<feature type="strand" evidence="9">
    <location>
        <begin position="102"/>
        <end position="108"/>
    </location>
</feature>
<feature type="strand" evidence="9">
    <location>
        <begin position="113"/>
        <end position="115"/>
    </location>
</feature>
<gene>
    <name evidence="5" type="primary">hinT</name>
    <name type="synonym">ycfF</name>
    <name type="ordered locus">b1103</name>
    <name type="ordered locus">JW1089</name>
</gene>
<dbReference type="EC" id="3.9.1.-" evidence="2 3 4"/>
<dbReference type="EMBL" id="U00096">
    <property type="protein sequence ID" value="AAC74187.1"/>
    <property type="molecule type" value="Genomic_DNA"/>
</dbReference>
<dbReference type="EMBL" id="AP009048">
    <property type="protein sequence ID" value="BAA35910.1"/>
    <property type="molecule type" value="Genomic_DNA"/>
</dbReference>
<dbReference type="EMBL" id="X17615">
    <property type="status" value="NOT_ANNOTATED_CDS"/>
    <property type="molecule type" value="Genomic_DNA"/>
</dbReference>
<dbReference type="PIR" id="JC5685">
    <property type="entry name" value="JC5685"/>
</dbReference>
<dbReference type="RefSeq" id="NP_415621.3">
    <property type="nucleotide sequence ID" value="NC_000913.3"/>
</dbReference>
<dbReference type="RefSeq" id="WP_000807125.1">
    <property type="nucleotide sequence ID" value="NZ_STEB01000016.1"/>
</dbReference>
<dbReference type="PDB" id="3N1S">
    <property type="method" value="X-ray"/>
    <property type="resolution" value="1.45 A"/>
    <property type="chains" value="A/B/E/F/I/J/M/N=1-119"/>
</dbReference>
<dbReference type="PDB" id="3N1T">
    <property type="method" value="X-ray"/>
    <property type="resolution" value="1.72 A"/>
    <property type="chains" value="A/B/E/F=1-119"/>
</dbReference>
<dbReference type="PDB" id="8V1Y">
    <property type="method" value="EM"/>
    <property type="resolution" value="2.70 A"/>
    <property type="chains" value="C/D=1-119"/>
</dbReference>
<dbReference type="PDBsum" id="3N1S"/>
<dbReference type="PDBsum" id="3N1T"/>
<dbReference type="PDBsum" id="8V1Y"/>
<dbReference type="EMDB" id="EMD-42892"/>
<dbReference type="SMR" id="P0ACE7"/>
<dbReference type="BioGRID" id="4261963">
    <property type="interactions" value="24"/>
</dbReference>
<dbReference type="BioGRID" id="852843">
    <property type="interactions" value="1"/>
</dbReference>
<dbReference type="DIP" id="DIP-48009N"/>
<dbReference type="FunCoup" id="P0ACE7">
    <property type="interactions" value="822"/>
</dbReference>
<dbReference type="IntAct" id="P0ACE7">
    <property type="interactions" value="14"/>
</dbReference>
<dbReference type="STRING" id="511145.b1103"/>
<dbReference type="jPOST" id="P0ACE7"/>
<dbReference type="PaxDb" id="511145-b1103"/>
<dbReference type="EnsemblBacteria" id="AAC74187">
    <property type="protein sequence ID" value="AAC74187"/>
    <property type="gene ID" value="b1103"/>
</dbReference>
<dbReference type="GeneID" id="93776305"/>
<dbReference type="GeneID" id="948549"/>
<dbReference type="KEGG" id="ecj:JW1089"/>
<dbReference type="KEGG" id="eco:b1103"/>
<dbReference type="KEGG" id="ecoc:C3026_06660"/>
<dbReference type="PATRIC" id="fig|1411691.4.peg.1164"/>
<dbReference type="EchoBASE" id="EB2090"/>
<dbReference type="eggNOG" id="COG0537">
    <property type="taxonomic scope" value="Bacteria"/>
</dbReference>
<dbReference type="HOGENOM" id="CLU_056776_8_1_6"/>
<dbReference type="InParanoid" id="P0ACE7"/>
<dbReference type="OMA" id="YRVVMNC"/>
<dbReference type="OrthoDB" id="9784774at2"/>
<dbReference type="PhylomeDB" id="P0ACE7"/>
<dbReference type="BioCyc" id="EcoCyc:EG12172-MONOMER"/>
<dbReference type="BioCyc" id="MetaCyc:EG12172-MONOMER"/>
<dbReference type="SABIO-RK" id="P0ACE7"/>
<dbReference type="EvolutionaryTrace" id="P0ACE7"/>
<dbReference type="PRO" id="PR:P0ACE7"/>
<dbReference type="Proteomes" id="UP000000625">
    <property type="component" value="Chromosome"/>
</dbReference>
<dbReference type="GO" id="GO:0005737">
    <property type="term" value="C:cytoplasm"/>
    <property type="evidence" value="ECO:0000318"/>
    <property type="project" value="GO_Central"/>
</dbReference>
<dbReference type="GO" id="GO:0005829">
    <property type="term" value="C:cytosol"/>
    <property type="evidence" value="ECO:0000314"/>
    <property type="project" value="EcoCyc"/>
</dbReference>
<dbReference type="GO" id="GO:0043530">
    <property type="term" value="F:adenosine 5'-monophosphoramidase activity"/>
    <property type="evidence" value="ECO:0000314"/>
    <property type="project" value="EcoCyc"/>
</dbReference>
<dbReference type="GO" id="GO:0000166">
    <property type="term" value="F:nucleotide binding"/>
    <property type="evidence" value="ECO:0007669"/>
    <property type="project" value="UniProtKB-KW"/>
</dbReference>
<dbReference type="GO" id="GO:0042803">
    <property type="term" value="F:protein homodimerization activity"/>
    <property type="evidence" value="ECO:0000314"/>
    <property type="project" value="EcoCyc"/>
</dbReference>
<dbReference type="GO" id="GO:0055130">
    <property type="term" value="P:D-alanine catabolic process"/>
    <property type="evidence" value="ECO:0000315"/>
    <property type="project" value="EcoCyc"/>
</dbReference>
<dbReference type="CDD" id="cd01276">
    <property type="entry name" value="PKCI_related"/>
    <property type="match status" value="1"/>
</dbReference>
<dbReference type="FunFam" id="3.30.428.10:FF:000003">
    <property type="entry name" value="Purine nucleoside phosphoramidase"/>
    <property type="match status" value="1"/>
</dbReference>
<dbReference type="Gene3D" id="3.30.428.10">
    <property type="entry name" value="HIT-like"/>
    <property type="match status" value="1"/>
</dbReference>
<dbReference type="InterPro" id="IPR019808">
    <property type="entry name" value="Histidine_triad_CS"/>
</dbReference>
<dbReference type="InterPro" id="IPR001310">
    <property type="entry name" value="Histidine_triad_HIT"/>
</dbReference>
<dbReference type="InterPro" id="IPR011146">
    <property type="entry name" value="HIT-like"/>
</dbReference>
<dbReference type="InterPro" id="IPR036265">
    <property type="entry name" value="HIT-like_sf"/>
</dbReference>
<dbReference type="NCBIfam" id="NF007965">
    <property type="entry name" value="PRK10687.1"/>
    <property type="match status" value="1"/>
</dbReference>
<dbReference type="PANTHER" id="PTHR23089">
    <property type="entry name" value="HISTIDINE TRIAD HIT PROTEIN"/>
    <property type="match status" value="1"/>
</dbReference>
<dbReference type="Pfam" id="PF01230">
    <property type="entry name" value="HIT"/>
    <property type="match status" value="1"/>
</dbReference>
<dbReference type="PRINTS" id="PR00332">
    <property type="entry name" value="HISTRIAD"/>
</dbReference>
<dbReference type="SUPFAM" id="SSF54197">
    <property type="entry name" value="HIT-like"/>
    <property type="match status" value="1"/>
</dbReference>
<dbReference type="PROSITE" id="PS00892">
    <property type="entry name" value="HIT_1"/>
    <property type="match status" value="1"/>
</dbReference>
<dbReference type="PROSITE" id="PS51084">
    <property type="entry name" value="HIT_2"/>
    <property type="match status" value="1"/>
</dbReference>
<evidence type="ECO:0000255" key="1">
    <source>
        <dbReference type="PROSITE-ProRule" id="PRU00464"/>
    </source>
</evidence>
<evidence type="ECO:0000269" key="2">
    <source>
    </source>
</evidence>
<evidence type="ECO:0000269" key="3">
    <source>
    </source>
</evidence>
<evidence type="ECO:0000269" key="4">
    <source>
    </source>
</evidence>
<evidence type="ECO:0000303" key="5">
    <source>
    </source>
</evidence>
<evidence type="ECO:0000305" key="6"/>
<evidence type="ECO:0000305" key="7">
    <source>
    </source>
</evidence>
<evidence type="ECO:0007744" key="8">
    <source>
        <dbReference type="PDB" id="3N1S"/>
    </source>
</evidence>
<evidence type="ECO:0007829" key="9">
    <source>
        <dbReference type="PDB" id="3N1S"/>
    </source>
</evidence>
<name>HINT_ECOLI</name>
<sequence length="119" mass="13241">MAEETIFSKIIRREIPSDIVYQDDLVTAFRDISPQAPTHILIIPNILIPTVNDVSAEHEQALGRMITVAAKIAEQEGIAEDGYRLIMNTNRHGGQEVYHIHMHLLGGRPLGPMLAHKGL</sequence>